<organism>
    <name type="scientific">Archaeoglobus fulgidus (strain ATCC 49558 / DSM 4304 / JCM 9628 / NBRC 100126 / VC-16)</name>
    <dbReference type="NCBI Taxonomy" id="224325"/>
    <lineage>
        <taxon>Archaea</taxon>
        <taxon>Methanobacteriati</taxon>
        <taxon>Methanobacteriota</taxon>
        <taxon>Archaeoglobi</taxon>
        <taxon>Archaeoglobales</taxon>
        <taxon>Archaeoglobaceae</taxon>
        <taxon>Archaeoglobus</taxon>
    </lineage>
</organism>
<name>Y612_ARCFU</name>
<proteinExistence type="predicted"/>
<feature type="chain" id="PRO_0000127899" description="Uncharacterized protein AF_0612">
    <location>
        <begin position="1"/>
        <end position="128"/>
    </location>
</feature>
<protein>
    <recommendedName>
        <fullName>Uncharacterized protein AF_0612</fullName>
    </recommendedName>
</protein>
<keyword id="KW-1185">Reference proteome</keyword>
<accession>O29643</accession>
<gene>
    <name type="ordered locus">AF_0612</name>
</gene>
<reference key="1">
    <citation type="journal article" date="1997" name="Nature">
        <title>The complete genome sequence of the hyperthermophilic, sulphate-reducing archaeon Archaeoglobus fulgidus.</title>
        <authorList>
            <person name="Klenk H.-P."/>
            <person name="Clayton R.A."/>
            <person name="Tomb J.-F."/>
            <person name="White O."/>
            <person name="Nelson K.E."/>
            <person name="Ketchum K.A."/>
            <person name="Dodson R.J."/>
            <person name="Gwinn M.L."/>
            <person name="Hickey E.K."/>
            <person name="Peterson J.D."/>
            <person name="Richardson D.L."/>
            <person name="Kerlavage A.R."/>
            <person name="Graham D.E."/>
            <person name="Kyrpides N.C."/>
            <person name="Fleischmann R.D."/>
            <person name="Quackenbush J."/>
            <person name="Lee N.H."/>
            <person name="Sutton G.G."/>
            <person name="Gill S.R."/>
            <person name="Kirkness E.F."/>
            <person name="Dougherty B.A."/>
            <person name="McKenney K."/>
            <person name="Adams M.D."/>
            <person name="Loftus B.J."/>
            <person name="Peterson S.N."/>
            <person name="Reich C.I."/>
            <person name="McNeil L.K."/>
            <person name="Badger J.H."/>
            <person name="Glodek A."/>
            <person name="Zhou L."/>
            <person name="Overbeek R."/>
            <person name="Gocayne J.D."/>
            <person name="Weidman J.F."/>
            <person name="McDonald L.A."/>
            <person name="Utterback T.R."/>
            <person name="Cotton M.D."/>
            <person name="Spriggs T."/>
            <person name="Artiach P."/>
            <person name="Kaine B.P."/>
            <person name="Sykes S.M."/>
            <person name="Sadow P.W."/>
            <person name="D'Andrea K.P."/>
            <person name="Bowman C."/>
            <person name="Fujii C."/>
            <person name="Garland S.A."/>
            <person name="Mason T.M."/>
            <person name="Olsen G.J."/>
            <person name="Fraser C.M."/>
            <person name="Smith H.O."/>
            <person name="Woese C.R."/>
            <person name="Venter J.C."/>
        </authorList>
    </citation>
    <scope>NUCLEOTIDE SEQUENCE [LARGE SCALE GENOMIC DNA]</scope>
    <source>
        <strain>ATCC 49558 / DSM 4304 / JCM 9628 / NBRC 100126 / VC-16</strain>
    </source>
</reference>
<dbReference type="EMBL" id="AE000782">
    <property type="protein sequence ID" value="AAB90625.1"/>
    <property type="molecule type" value="Genomic_DNA"/>
</dbReference>
<dbReference type="PIR" id="D69326">
    <property type="entry name" value="D69326"/>
</dbReference>
<dbReference type="RefSeq" id="WP_010878116.1">
    <property type="nucleotide sequence ID" value="NC_000917.1"/>
</dbReference>
<dbReference type="PaxDb" id="224325-AF_0612"/>
<dbReference type="EnsemblBacteria" id="AAB90625">
    <property type="protein sequence ID" value="AAB90625"/>
    <property type="gene ID" value="AF_0612"/>
</dbReference>
<dbReference type="KEGG" id="afu:AF_0612"/>
<dbReference type="eggNOG" id="arCOG04029">
    <property type="taxonomic scope" value="Archaea"/>
</dbReference>
<dbReference type="HOGENOM" id="CLU_1943753_0_0_2"/>
<dbReference type="OrthoDB" id="51284at2157"/>
<dbReference type="Proteomes" id="UP000002199">
    <property type="component" value="Chromosome"/>
</dbReference>
<dbReference type="Gene3D" id="2.40.70.10">
    <property type="entry name" value="Acid Proteases"/>
    <property type="match status" value="1"/>
</dbReference>
<dbReference type="InterPro" id="IPR022274">
    <property type="entry name" value="Peptidase_asp_AF0612"/>
</dbReference>
<dbReference type="InterPro" id="IPR021109">
    <property type="entry name" value="Peptidase_aspartic_dom_sf"/>
</dbReference>
<dbReference type="NCBIfam" id="TIGR03698">
    <property type="entry name" value="clan_AA_DTGF"/>
    <property type="match status" value="1"/>
</dbReference>
<sequence length="128" mass="14319">MFVNGTPVIEIVLSNPLLSVKFPESGSVLAVIDTGYEGFAVVPQDIFKKLRLDELSQHKRALTLPTERLIESTGSYARIIIPELKTFRDGFVETTDGVDEIVLGTEFLEGFKLVLDYCTRSFEISSCW</sequence>